<evidence type="ECO:0000255" key="1">
    <source>
        <dbReference type="HAMAP-Rule" id="MF_01365"/>
    </source>
</evidence>
<evidence type="ECO:0000305" key="2"/>
<comment type="function">
    <text evidence="1">This protein binds to the 23S rRNA, and is important in its secondary structure. It is located near the subunit interface in the base of the L7/L12 stalk, and near the tRNA binding site of the peptidyltransferase center.</text>
</comment>
<comment type="subunit">
    <text evidence="1">Part of the 50S ribosomal subunit.</text>
</comment>
<comment type="similarity">
    <text evidence="1">Belongs to the universal ribosomal protein uL6 family.</text>
</comment>
<sequence length="179" mass="19198">MSRIGKRPIPIPAKVSVAIDGRLVSVKGPKGELSRELPSGVVVTQEDGNIIVSRADESRLARQRHGLSRTLVANLVEGVDSGFQKRLEIIGVGYRAQVQGTTLILNVGYSNPVQIEPPEGIQFVVENNTNVVVSGISKEVVGNTAARIRAVRPPEPYKGKGIRYAGEVVLRKAGKTGKK</sequence>
<protein>
    <recommendedName>
        <fullName evidence="1">Large ribosomal subunit protein uL6</fullName>
    </recommendedName>
    <alternativeName>
        <fullName evidence="2">50S ribosomal protein L6</fullName>
    </alternativeName>
</protein>
<organism>
    <name type="scientific">Synechococcus sp. (strain ATCC 27144 / PCC 6301 / SAUG 1402/1)</name>
    <name type="common">Anacystis nidulans</name>
    <dbReference type="NCBI Taxonomy" id="269084"/>
    <lineage>
        <taxon>Bacteria</taxon>
        <taxon>Bacillati</taxon>
        <taxon>Cyanobacteriota</taxon>
        <taxon>Cyanophyceae</taxon>
        <taxon>Synechococcales</taxon>
        <taxon>Synechococcaceae</taxon>
        <taxon>Synechococcus</taxon>
    </lineage>
</organism>
<name>RL6_SYNP6</name>
<accession>O24703</accession>
<feature type="chain" id="PRO_0000131069" description="Large ribosomal subunit protein uL6">
    <location>
        <begin position="1"/>
        <end position="179"/>
    </location>
</feature>
<reference key="1">
    <citation type="journal article" date="1997" name="Gene">
        <title>Organization of a large gene cluster encoding ribosomal proteins in the cyanobacterium Synechococcus sp. strain PCC 6301: comparison of gene clusters among cyanobacteria, eubacteria and chloroplast genomes.</title>
        <authorList>
            <person name="Sugita M."/>
            <person name="Sugishita H."/>
            <person name="Fujishiro T."/>
            <person name="Tsuboi M."/>
            <person name="Sugita C."/>
            <person name="Endo T."/>
            <person name="Sugiura M."/>
        </authorList>
    </citation>
    <scope>NUCLEOTIDE SEQUENCE [GENOMIC DNA]</scope>
</reference>
<reference key="2">
    <citation type="journal article" date="2007" name="Photosyn. Res.">
        <title>Complete nucleotide sequence of the freshwater unicellular cyanobacterium Synechococcus elongatus PCC 6301 chromosome: gene content and organization.</title>
        <authorList>
            <person name="Sugita C."/>
            <person name="Ogata K."/>
            <person name="Shikata M."/>
            <person name="Jikuya H."/>
            <person name="Takano J."/>
            <person name="Furumichi M."/>
            <person name="Kanehisa M."/>
            <person name="Omata T."/>
            <person name="Sugiura M."/>
            <person name="Sugita M."/>
        </authorList>
    </citation>
    <scope>NUCLEOTIDE SEQUENCE [LARGE SCALE GENOMIC DNA]</scope>
    <source>
        <strain>ATCC 27144 / PCC 6301 / SAUG 1402/1</strain>
    </source>
</reference>
<keyword id="KW-0687">Ribonucleoprotein</keyword>
<keyword id="KW-0689">Ribosomal protein</keyword>
<keyword id="KW-0694">RNA-binding</keyword>
<keyword id="KW-0699">rRNA-binding</keyword>
<gene>
    <name evidence="1" type="primary">rplF</name>
    <name evidence="1" type="synonym">rpl6</name>
    <name type="ordered locus">syc1879_d</name>
</gene>
<dbReference type="EMBL" id="AB000111">
    <property type="protein sequence ID" value="BAA22463.1"/>
    <property type="molecule type" value="Genomic_DNA"/>
</dbReference>
<dbReference type="EMBL" id="AP008231">
    <property type="protein sequence ID" value="BAD80069.1"/>
    <property type="molecule type" value="Genomic_DNA"/>
</dbReference>
<dbReference type="RefSeq" id="WP_011244189.1">
    <property type="nucleotide sequence ID" value="NZ_CP085785.1"/>
</dbReference>
<dbReference type="SMR" id="O24703"/>
<dbReference type="GeneID" id="72431101"/>
<dbReference type="KEGG" id="syc:syc1879_d"/>
<dbReference type="eggNOG" id="COG0097">
    <property type="taxonomic scope" value="Bacteria"/>
</dbReference>
<dbReference type="Proteomes" id="UP000001175">
    <property type="component" value="Chromosome"/>
</dbReference>
<dbReference type="GO" id="GO:0022625">
    <property type="term" value="C:cytosolic large ribosomal subunit"/>
    <property type="evidence" value="ECO:0007669"/>
    <property type="project" value="TreeGrafter"/>
</dbReference>
<dbReference type="GO" id="GO:0019843">
    <property type="term" value="F:rRNA binding"/>
    <property type="evidence" value="ECO:0007669"/>
    <property type="project" value="UniProtKB-UniRule"/>
</dbReference>
<dbReference type="GO" id="GO:0003735">
    <property type="term" value="F:structural constituent of ribosome"/>
    <property type="evidence" value="ECO:0007669"/>
    <property type="project" value="InterPro"/>
</dbReference>
<dbReference type="GO" id="GO:0002181">
    <property type="term" value="P:cytoplasmic translation"/>
    <property type="evidence" value="ECO:0007669"/>
    <property type="project" value="TreeGrafter"/>
</dbReference>
<dbReference type="FunFam" id="3.90.930.12:FF:000001">
    <property type="entry name" value="50S ribosomal protein L6"/>
    <property type="match status" value="1"/>
</dbReference>
<dbReference type="FunFam" id="3.90.930.12:FF:000002">
    <property type="entry name" value="50S ribosomal protein L6"/>
    <property type="match status" value="1"/>
</dbReference>
<dbReference type="Gene3D" id="3.90.930.12">
    <property type="entry name" value="Ribosomal protein L6, alpha-beta domain"/>
    <property type="match status" value="2"/>
</dbReference>
<dbReference type="HAMAP" id="MF_01365_B">
    <property type="entry name" value="Ribosomal_uL6_B"/>
    <property type="match status" value="1"/>
</dbReference>
<dbReference type="InterPro" id="IPR000702">
    <property type="entry name" value="Ribosomal_uL6-like"/>
</dbReference>
<dbReference type="InterPro" id="IPR036789">
    <property type="entry name" value="Ribosomal_uL6-like_a/b-dom_sf"/>
</dbReference>
<dbReference type="InterPro" id="IPR020040">
    <property type="entry name" value="Ribosomal_uL6_a/b-dom"/>
</dbReference>
<dbReference type="InterPro" id="IPR019906">
    <property type="entry name" value="Ribosomal_uL6_bac-type"/>
</dbReference>
<dbReference type="InterPro" id="IPR002358">
    <property type="entry name" value="Ribosomal_uL6_CS"/>
</dbReference>
<dbReference type="NCBIfam" id="TIGR03654">
    <property type="entry name" value="L6_bact"/>
    <property type="match status" value="1"/>
</dbReference>
<dbReference type="PANTHER" id="PTHR11655">
    <property type="entry name" value="60S/50S RIBOSOMAL PROTEIN L6/L9"/>
    <property type="match status" value="1"/>
</dbReference>
<dbReference type="PANTHER" id="PTHR11655:SF14">
    <property type="entry name" value="LARGE RIBOSOMAL SUBUNIT PROTEIN UL6M"/>
    <property type="match status" value="1"/>
</dbReference>
<dbReference type="Pfam" id="PF00347">
    <property type="entry name" value="Ribosomal_L6"/>
    <property type="match status" value="2"/>
</dbReference>
<dbReference type="PIRSF" id="PIRSF002162">
    <property type="entry name" value="Ribosomal_L6"/>
    <property type="match status" value="1"/>
</dbReference>
<dbReference type="PRINTS" id="PR00059">
    <property type="entry name" value="RIBOSOMALL6"/>
</dbReference>
<dbReference type="SUPFAM" id="SSF56053">
    <property type="entry name" value="Ribosomal protein L6"/>
    <property type="match status" value="2"/>
</dbReference>
<dbReference type="PROSITE" id="PS00525">
    <property type="entry name" value="RIBOSOMAL_L6_1"/>
    <property type="match status" value="1"/>
</dbReference>
<proteinExistence type="inferred from homology"/>